<proteinExistence type="inferred from homology"/>
<organism>
    <name type="scientific">Caldivirga maquilingensis (strain ATCC 700844 / DSM 13496 / JCM 10307 / IC-167)</name>
    <dbReference type="NCBI Taxonomy" id="397948"/>
    <lineage>
        <taxon>Archaea</taxon>
        <taxon>Thermoproteota</taxon>
        <taxon>Thermoprotei</taxon>
        <taxon>Thermoproteales</taxon>
        <taxon>Thermoproteaceae</taxon>
        <taxon>Caldivirga</taxon>
    </lineage>
</organism>
<keyword id="KW-0963">Cytoplasm</keyword>
<keyword id="KW-0255">Endonuclease</keyword>
<keyword id="KW-0378">Hydrolase</keyword>
<keyword id="KW-0464">Manganese</keyword>
<keyword id="KW-0479">Metal-binding</keyword>
<keyword id="KW-0540">Nuclease</keyword>
<keyword id="KW-1185">Reference proteome</keyword>
<reference key="1">
    <citation type="submission" date="2007-10" db="EMBL/GenBank/DDBJ databases">
        <title>Complete sequence of Caldivirga maquilingensis IC-167.</title>
        <authorList>
            <consortium name="US DOE Joint Genome Institute"/>
            <person name="Copeland A."/>
            <person name="Lucas S."/>
            <person name="Lapidus A."/>
            <person name="Barry K."/>
            <person name="Glavina del Rio T."/>
            <person name="Dalin E."/>
            <person name="Tice H."/>
            <person name="Pitluck S."/>
            <person name="Saunders E."/>
            <person name="Brettin T."/>
            <person name="Bruce D."/>
            <person name="Detter J.C."/>
            <person name="Han C."/>
            <person name="Schmutz J."/>
            <person name="Larimer F."/>
            <person name="Land M."/>
            <person name="Hauser L."/>
            <person name="Kyrpides N."/>
            <person name="Ivanova N."/>
            <person name="Biddle J.F."/>
            <person name="Zhang Z."/>
            <person name="Fitz-Gibbon S.T."/>
            <person name="Lowe T.M."/>
            <person name="Saltikov C."/>
            <person name="House C.H."/>
            <person name="Richardson P."/>
        </authorList>
    </citation>
    <scope>NUCLEOTIDE SEQUENCE [LARGE SCALE GENOMIC DNA]</scope>
    <source>
        <strain>ATCC 700844 / DSM 13496 / JCM 10307 / IC-167</strain>
    </source>
</reference>
<gene>
    <name evidence="1" type="primary">rnhB</name>
    <name type="ordered locus">Cmaq_1729</name>
</gene>
<name>RNH2_CALMQ</name>
<feature type="chain" id="PRO_0000334973" description="Ribonuclease HII">
    <location>
        <begin position="1"/>
        <end position="209"/>
    </location>
</feature>
<feature type="domain" description="RNase H type-2" evidence="2">
    <location>
        <begin position="6"/>
        <end position="209"/>
    </location>
</feature>
<feature type="binding site" evidence="1">
    <location>
        <position position="12"/>
    </location>
    <ligand>
        <name>a divalent metal cation</name>
        <dbReference type="ChEBI" id="CHEBI:60240"/>
    </ligand>
</feature>
<feature type="binding site" evidence="1">
    <location>
        <position position="13"/>
    </location>
    <ligand>
        <name>a divalent metal cation</name>
        <dbReference type="ChEBI" id="CHEBI:60240"/>
    </ligand>
</feature>
<feature type="binding site" evidence="1">
    <location>
        <position position="108"/>
    </location>
    <ligand>
        <name>a divalent metal cation</name>
        <dbReference type="ChEBI" id="CHEBI:60240"/>
    </ligand>
</feature>
<protein>
    <recommendedName>
        <fullName evidence="1">Ribonuclease HII</fullName>
        <shortName evidence="1">RNase HII</shortName>
        <ecNumber evidence="1">3.1.26.4</ecNumber>
    </recommendedName>
</protein>
<accession>A8MAH5</accession>
<dbReference type="EC" id="3.1.26.4" evidence="1"/>
<dbReference type="EMBL" id="CP000852">
    <property type="protein sequence ID" value="ABW02552.1"/>
    <property type="molecule type" value="Genomic_DNA"/>
</dbReference>
<dbReference type="RefSeq" id="WP_012186771.1">
    <property type="nucleotide sequence ID" value="NC_009954.1"/>
</dbReference>
<dbReference type="SMR" id="A8MAH5"/>
<dbReference type="STRING" id="397948.Cmaq_1729"/>
<dbReference type="GeneID" id="5709785"/>
<dbReference type="KEGG" id="cma:Cmaq_1729"/>
<dbReference type="eggNOG" id="arCOG04121">
    <property type="taxonomic scope" value="Archaea"/>
</dbReference>
<dbReference type="HOGENOM" id="CLU_036532_0_4_2"/>
<dbReference type="OrthoDB" id="33866at2157"/>
<dbReference type="Proteomes" id="UP000001137">
    <property type="component" value="Chromosome"/>
</dbReference>
<dbReference type="GO" id="GO:0005737">
    <property type="term" value="C:cytoplasm"/>
    <property type="evidence" value="ECO:0007669"/>
    <property type="project" value="UniProtKB-SubCell"/>
</dbReference>
<dbReference type="GO" id="GO:0032299">
    <property type="term" value="C:ribonuclease H2 complex"/>
    <property type="evidence" value="ECO:0007669"/>
    <property type="project" value="TreeGrafter"/>
</dbReference>
<dbReference type="GO" id="GO:0030145">
    <property type="term" value="F:manganese ion binding"/>
    <property type="evidence" value="ECO:0007669"/>
    <property type="project" value="UniProtKB-UniRule"/>
</dbReference>
<dbReference type="GO" id="GO:0003723">
    <property type="term" value="F:RNA binding"/>
    <property type="evidence" value="ECO:0007669"/>
    <property type="project" value="InterPro"/>
</dbReference>
<dbReference type="GO" id="GO:0004523">
    <property type="term" value="F:RNA-DNA hybrid ribonuclease activity"/>
    <property type="evidence" value="ECO:0007669"/>
    <property type="project" value="UniProtKB-UniRule"/>
</dbReference>
<dbReference type="GO" id="GO:0043137">
    <property type="term" value="P:DNA replication, removal of RNA primer"/>
    <property type="evidence" value="ECO:0007669"/>
    <property type="project" value="TreeGrafter"/>
</dbReference>
<dbReference type="GO" id="GO:0006298">
    <property type="term" value="P:mismatch repair"/>
    <property type="evidence" value="ECO:0007669"/>
    <property type="project" value="TreeGrafter"/>
</dbReference>
<dbReference type="CDD" id="cd07180">
    <property type="entry name" value="RNase_HII_archaea_like"/>
    <property type="match status" value="1"/>
</dbReference>
<dbReference type="Gene3D" id="3.30.420.10">
    <property type="entry name" value="Ribonuclease H-like superfamily/Ribonuclease H"/>
    <property type="match status" value="1"/>
</dbReference>
<dbReference type="Gene3D" id="1.10.10.460">
    <property type="entry name" value="Ribonuclease hii. Domain 2"/>
    <property type="match status" value="1"/>
</dbReference>
<dbReference type="HAMAP" id="MF_00052_A">
    <property type="entry name" value="RNase_HII_A"/>
    <property type="match status" value="1"/>
</dbReference>
<dbReference type="InterPro" id="IPR004649">
    <property type="entry name" value="RNase_H2_suA"/>
</dbReference>
<dbReference type="InterPro" id="IPR001352">
    <property type="entry name" value="RNase_HII/HIII"/>
</dbReference>
<dbReference type="InterPro" id="IPR024567">
    <property type="entry name" value="RNase_HII/HIII_dom"/>
</dbReference>
<dbReference type="InterPro" id="IPR020787">
    <property type="entry name" value="RNase_HII_arc"/>
</dbReference>
<dbReference type="InterPro" id="IPR023160">
    <property type="entry name" value="RNase_HII_hlx-loop-hlx_cap_dom"/>
</dbReference>
<dbReference type="InterPro" id="IPR012337">
    <property type="entry name" value="RNaseH-like_sf"/>
</dbReference>
<dbReference type="InterPro" id="IPR036397">
    <property type="entry name" value="RNaseH_sf"/>
</dbReference>
<dbReference type="NCBIfam" id="TIGR00729">
    <property type="entry name" value="ribonuclease HII"/>
    <property type="match status" value="1"/>
</dbReference>
<dbReference type="PANTHER" id="PTHR10954:SF23">
    <property type="entry name" value="RIBONUCLEASE"/>
    <property type="match status" value="1"/>
</dbReference>
<dbReference type="PANTHER" id="PTHR10954">
    <property type="entry name" value="RIBONUCLEASE H2 SUBUNIT A"/>
    <property type="match status" value="1"/>
</dbReference>
<dbReference type="Pfam" id="PF01351">
    <property type="entry name" value="RNase_HII"/>
    <property type="match status" value="1"/>
</dbReference>
<dbReference type="SUPFAM" id="SSF53098">
    <property type="entry name" value="Ribonuclease H-like"/>
    <property type="match status" value="1"/>
</dbReference>
<dbReference type="PROSITE" id="PS51975">
    <property type="entry name" value="RNASE_H_2"/>
    <property type="match status" value="1"/>
</dbReference>
<comment type="function">
    <text evidence="1">Endonuclease that specifically degrades the RNA of RNA-DNA hybrids.</text>
</comment>
<comment type="catalytic activity">
    <reaction evidence="1">
        <text>Endonucleolytic cleavage to 5'-phosphomonoester.</text>
        <dbReference type="EC" id="3.1.26.4"/>
    </reaction>
</comment>
<comment type="cofactor">
    <cofactor evidence="1">
        <name>Mn(2+)</name>
        <dbReference type="ChEBI" id="CHEBI:29035"/>
    </cofactor>
    <cofactor evidence="1">
        <name>Mg(2+)</name>
        <dbReference type="ChEBI" id="CHEBI:18420"/>
    </cofactor>
    <text evidence="1">Manganese or magnesium. Binds 1 divalent metal ion per monomer in the absence of substrate. May bind a second metal ion after substrate binding.</text>
</comment>
<comment type="subcellular location">
    <subcellularLocation>
        <location evidence="1">Cytoplasm</location>
    </subcellularLocation>
</comment>
<comment type="similarity">
    <text evidence="1">Belongs to the RNase HII family.</text>
</comment>
<sequence length="209" mass="23036">MGTVNSLEAGIDEAGRGPVIGPMVIAIVGWSNSEAEGIGVKDSKQLTPSGRSRLYKLIVSKAPCVRHVIVEPSEIDYYVNRGLLNELEAIKMSELIKACSGVTRVYVDSPDPNPSRFRGFINVKDVELIVLNHADESIPLVSAASIVAKVIRDTIISRLKETYGDFGSGYPSDPRTISALRRWINNGTLPPIVRRSWRTIKRMTNSRLF</sequence>
<evidence type="ECO:0000255" key="1">
    <source>
        <dbReference type="HAMAP-Rule" id="MF_00052"/>
    </source>
</evidence>
<evidence type="ECO:0000255" key="2">
    <source>
        <dbReference type="PROSITE-ProRule" id="PRU01319"/>
    </source>
</evidence>